<feature type="chain" id="PRO_0000369316" description="Molybdopterin synthase sulfur carrier subunit">
    <location>
        <begin position="1"/>
        <end position="96"/>
    </location>
</feature>
<feature type="modified residue" description="1-thioglycine; alternate" evidence="1">
    <location>
        <position position="96"/>
    </location>
</feature>
<feature type="modified residue" description="Glycyl adenylate; alternate" evidence="1">
    <location>
        <position position="96"/>
    </location>
</feature>
<sequence length="96" mass="10533">MDKEVTKIESDDTSSVEIKVLLFARARELTGVPDLTLKMPSGSTTQKCLDELVLKFPSLEEVRSCVVLALNEEYTTDSAIVQHRDELAIIPPISGG</sequence>
<comment type="function">
    <text evidence="1">Acts as a sulfur carrier required for molybdopterin biosynthesis. Component of the molybdopterin synthase complex that catalyzes the conversion of precursor Z into molybdopterin by mediating the incorporation of 2 sulfur atoms into precursor Z to generate a dithiolene group. In the complex, serves as sulfur donor by being thiocarboxylated (-COSH) at its C-terminus by MOCS3. After interaction with MOCS2B, the sulfur is then transferred to precursor Z to form molybdopterin.</text>
</comment>
<comment type="pathway">
    <text evidence="1">Cofactor biosynthesis; molybdopterin biosynthesis.</text>
</comment>
<comment type="subunit">
    <text evidence="1">Heterotetramer; composed of 2 small (MOCS2A) and 2 large (MOCS2B) subunits.</text>
</comment>
<comment type="subcellular location">
    <subcellularLocation>
        <location evidence="1">Cytoplasm</location>
    </subcellularLocation>
</comment>
<comment type="PTM">
    <text evidence="1">C-terminal thiocarboxylation occurs in 2 steps, it is first acyl-adenylated (-COAMP) via the hesA/moeB/thiF part of MOCS3, then thiocarboxylated (-COSH) via the rhodanese domain of MOCS3.</text>
</comment>
<comment type="similarity">
    <text evidence="1">Belongs to the MoaD family. MOCS2A subfamily.</text>
</comment>
<protein>
    <recommendedName>
        <fullName evidence="1">Molybdopterin synthase sulfur carrier subunit</fullName>
    </recommendedName>
    <alternativeName>
        <fullName evidence="1">Molybdenum cofactor synthesis protein 2 small subunit</fullName>
    </alternativeName>
    <alternativeName>
        <fullName evidence="1">Molybdenum cofactor synthesis protein 2A</fullName>
        <shortName evidence="1">MOCS2A</shortName>
    </alternativeName>
    <alternativeName>
        <fullName evidence="1">Sulfur carrier protein MOCS2A</fullName>
    </alternativeName>
</protein>
<keyword id="KW-0963">Cytoplasm</keyword>
<keyword id="KW-0501">Molybdenum cofactor biosynthesis</keyword>
<keyword id="KW-0547">Nucleotide-binding</keyword>
<keyword id="KW-0597">Phosphoprotein</keyword>
<keyword id="KW-1185">Reference proteome</keyword>
<evidence type="ECO:0000255" key="1">
    <source>
        <dbReference type="HAMAP-Rule" id="MF_03051"/>
    </source>
</evidence>
<reference key="1">
    <citation type="submission" date="1999-11" db="EMBL/GenBank/DDBJ databases">
        <title>Isolation and identification of small subunit of the molybdopterin synthase in Arabidopsis thaliana.</title>
        <authorList>
            <person name="Orlich S."/>
            <person name="Nieder J."/>
            <person name="Gutzke G."/>
            <person name="Mendel R.R."/>
        </authorList>
    </citation>
    <scope>NUCLEOTIDE SEQUENCE [MRNA]</scope>
</reference>
<reference key="2">
    <citation type="journal article" date="1999" name="Nature">
        <title>Sequence and analysis of chromosome 4 of the plant Arabidopsis thaliana.</title>
        <authorList>
            <person name="Mayer K.F.X."/>
            <person name="Schueller C."/>
            <person name="Wambutt R."/>
            <person name="Murphy G."/>
            <person name="Volckaert G."/>
            <person name="Pohl T."/>
            <person name="Duesterhoeft A."/>
            <person name="Stiekema W."/>
            <person name="Entian K.-D."/>
            <person name="Terryn N."/>
            <person name="Harris B."/>
            <person name="Ansorge W."/>
            <person name="Brandt P."/>
            <person name="Grivell L.A."/>
            <person name="Rieger M."/>
            <person name="Weichselgartner M."/>
            <person name="de Simone V."/>
            <person name="Obermaier B."/>
            <person name="Mache R."/>
            <person name="Mueller M."/>
            <person name="Kreis M."/>
            <person name="Delseny M."/>
            <person name="Puigdomenech P."/>
            <person name="Watson M."/>
            <person name="Schmidtheini T."/>
            <person name="Reichert B."/>
            <person name="Portetelle D."/>
            <person name="Perez-Alonso M."/>
            <person name="Boutry M."/>
            <person name="Bancroft I."/>
            <person name="Vos P."/>
            <person name="Hoheisel J."/>
            <person name="Zimmermann W."/>
            <person name="Wedler H."/>
            <person name="Ridley P."/>
            <person name="Langham S.-A."/>
            <person name="McCullagh B."/>
            <person name="Bilham L."/>
            <person name="Robben J."/>
            <person name="van der Schueren J."/>
            <person name="Grymonprez B."/>
            <person name="Chuang Y.-J."/>
            <person name="Vandenbussche F."/>
            <person name="Braeken M."/>
            <person name="Weltjens I."/>
            <person name="Voet M."/>
            <person name="Bastiaens I."/>
            <person name="Aert R."/>
            <person name="Defoor E."/>
            <person name="Weitzenegger T."/>
            <person name="Bothe G."/>
            <person name="Ramsperger U."/>
            <person name="Hilbert H."/>
            <person name="Braun M."/>
            <person name="Holzer E."/>
            <person name="Brandt A."/>
            <person name="Peters S."/>
            <person name="van Staveren M."/>
            <person name="Dirkse W."/>
            <person name="Mooijman P."/>
            <person name="Klein Lankhorst R."/>
            <person name="Rose M."/>
            <person name="Hauf J."/>
            <person name="Koetter P."/>
            <person name="Berneiser S."/>
            <person name="Hempel S."/>
            <person name="Feldpausch M."/>
            <person name="Lamberth S."/>
            <person name="Van den Daele H."/>
            <person name="De Keyser A."/>
            <person name="Buysshaert C."/>
            <person name="Gielen J."/>
            <person name="Villarroel R."/>
            <person name="De Clercq R."/>
            <person name="van Montagu M."/>
            <person name="Rogers J."/>
            <person name="Cronin A."/>
            <person name="Quail M.A."/>
            <person name="Bray-Allen S."/>
            <person name="Clark L."/>
            <person name="Doggett J."/>
            <person name="Hall S."/>
            <person name="Kay M."/>
            <person name="Lennard N."/>
            <person name="McLay K."/>
            <person name="Mayes R."/>
            <person name="Pettett A."/>
            <person name="Rajandream M.A."/>
            <person name="Lyne M."/>
            <person name="Benes V."/>
            <person name="Rechmann S."/>
            <person name="Borkova D."/>
            <person name="Bloecker H."/>
            <person name="Scharfe M."/>
            <person name="Grimm M."/>
            <person name="Loehnert T.-H."/>
            <person name="Dose S."/>
            <person name="de Haan M."/>
            <person name="Maarse A.C."/>
            <person name="Schaefer M."/>
            <person name="Mueller-Auer S."/>
            <person name="Gabel C."/>
            <person name="Fuchs M."/>
            <person name="Fartmann B."/>
            <person name="Granderath K."/>
            <person name="Dauner D."/>
            <person name="Herzl A."/>
            <person name="Neumann S."/>
            <person name="Argiriou A."/>
            <person name="Vitale D."/>
            <person name="Liguori R."/>
            <person name="Piravandi E."/>
            <person name="Massenet O."/>
            <person name="Quigley F."/>
            <person name="Clabauld G."/>
            <person name="Muendlein A."/>
            <person name="Felber R."/>
            <person name="Schnabl S."/>
            <person name="Hiller R."/>
            <person name="Schmidt W."/>
            <person name="Lecharny A."/>
            <person name="Aubourg S."/>
            <person name="Chefdor F."/>
            <person name="Cooke R."/>
            <person name="Berger C."/>
            <person name="Monfort A."/>
            <person name="Casacuberta E."/>
            <person name="Gibbons T."/>
            <person name="Weber N."/>
            <person name="Vandenbol M."/>
            <person name="Bargues M."/>
            <person name="Terol J."/>
            <person name="Torres A."/>
            <person name="Perez-Perez A."/>
            <person name="Purnelle B."/>
            <person name="Bent E."/>
            <person name="Johnson S."/>
            <person name="Tacon D."/>
            <person name="Jesse T."/>
            <person name="Heijnen L."/>
            <person name="Schwarz S."/>
            <person name="Scholler P."/>
            <person name="Heber S."/>
            <person name="Francs P."/>
            <person name="Bielke C."/>
            <person name="Frishman D."/>
            <person name="Haase D."/>
            <person name="Lemcke K."/>
            <person name="Mewes H.-W."/>
            <person name="Stocker S."/>
            <person name="Zaccaria P."/>
            <person name="Bevan M."/>
            <person name="Wilson R.K."/>
            <person name="de la Bastide M."/>
            <person name="Habermann K."/>
            <person name="Parnell L."/>
            <person name="Dedhia N."/>
            <person name="Gnoj L."/>
            <person name="Schutz K."/>
            <person name="Huang E."/>
            <person name="Spiegel L."/>
            <person name="Sekhon M."/>
            <person name="Murray J."/>
            <person name="Sheet P."/>
            <person name="Cordes M."/>
            <person name="Abu-Threideh J."/>
            <person name="Stoneking T."/>
            <person name="Kalicki J."/>
            <person name="Graves T."/>
            <person name="Harmon G."/>
            <person name="Edwards J."/>
            <person name="Latreille P."/>
            <person name="Courtney L."/>
            <person name="Cloud J."/>
            <person name="Abbott A."/>
            <person name="Scott K."/>
            <person name="Johnson D."/>
            <person name="Minx P."/>
            <person name="Bentley D."/>
            <person name="Fulton B."/>
            <person name="Miller N."/>
            <person name="Greco T."/>
            <person name="Kemp K."/>
            <person name="Kramer J."/>
            <person name="Fulton L."/>
            <person name="Mardis E."/>
            <person name="Dante M."/>
            <person name="Pepin K."/>
            <person name="Hillier L.W."/>
            <person name="Nelson J."/>
            <person name="Spieth J."/>
            <person name="Ryan E."/>
            <person name="Andrews S."/>
            <person name="Geisel C."/>
            <person name="Layman D."/>
            <person name="Du H."/>
            <person name="Ali J."/>
            <person name="Berghoff A."/>
            <person name="Jones K."/>
            <person name="Drone K."/>
            <person name="Cotton M."/>
            <person name="Joshu C."/>
            <person name="Antonoiu B."/>
            <person name="Zidanic M."/>
            <person name="Strong C."/>
            <person name="Sun H."/>
            <person name="Lamar B."/>
            <person name="Yordan C."/>
            <person name="Ma P."/>
            <person name="Zhong J."/>
            <person name="Preston R."/>
            <person name="Vil D."/>
            <person name="Shekher M."/>
            <person name="Matero A."/>
            <person name="Shah R."/>
            <person name="Swaby I.K."/>
            <person name="O'Shaughnessy A."/>
            <person name="Rodriguez M."/>
            <person name="Hoffman J."/>
            <person name="Till S."/>
            <person name="Granat S."/>
            <person name="Shohdy N."/>
            <person name="Hasegawa A."/>
            <person name="Hameed A."/>
            <person name="Lodhi M."/>
            <person name="Johnson A."/>
            <person name="Chen E."/>
            <person name="Marra M.A."/>
            <person name="Martienssen R."/>
            <person name="McCombie W.R."/>
        </authorList>
    </citation>
    <scope>NUCLEOTIDE SEQUENCE [LARGE SCALE GENOMIC DNA]</scope>
    <source>
        <strain>cv. Columbia</strain>
    </source>
</reference>
<reference key="3">
    <citation type="journal article" date="2017" name="Plant J.">
        <title>Araport11: a complete reannotation of the Arabidopsis thaliana reference genome.</title>
        <authorList>
            <person name="Cheng C.Y."/>
            <person name="Krishnakumar V."/>
            <person name="Chan A.P."/>
            <person name="Thibaud-Nissen F."/>
            <person name="Schobel S."/>
            <person name="Town C.D."/>
        </authorList>
    </citation>
    <scope>GENOME REANNOTATION</scope>
    <source>
        <strain>cv. Columbia</strain>
    </source>
</reference>
<reference key="4">
    <citation type="journal article" date="2002" name="Science">
        <title>Functional annotation of a full-length Arabidopsis cDNA collection.</title>
        <authorList>
            <person name="Seki M."/>
            <person name="Narusaka M."/>
            <person name="Kamiya A."/>
            <person name="Ishida J."/>
            <person name="Satou M."/>
            <person name="Sakurai T."/>
            <person name="Nakajima M."/>
            <person name="Enju A."/>
            <person name="Akiyama K."/>
            <person name="Oono Y."/>
            <person name="Muramatsu M."/>
            <person name="Hayashizaki Y."/>
            <person name="Kawai J."/>
            <person name="Carninci P."/>
            <person name="Itoh M."/>
            <person name="Ishii Y."/>
            <person name="Arakawa T."/>
            <person name="Shibata K."/>
            <person name="Shinagawa A."/>
            <person name="Shinozaki K."/>
        </authorList>
    </citation>
    <scope>NUCLEOTIDE SEQUENCE [LARGE SCALE MRNA]</scope>
    <source>
        <strain>cv. Columbia</strain>
    </source>
</reference>
<reference key="5">
    <citation type="journal article" date="2009" name="DNA Res.">
        <title>Analysis of multiple occurrences of alternative splicing events in Arabidopsis thaliana using novel sequenced full-length cDNAs.</title>
        <authorList>
            <person name="Iida K."/>
            <person name="Fukami-Kobayashi K."/>
            <person name="Toyoda A."/>
            <person name="Sakaki Y."/>
            <person name="Kobayashi M."/>
            <person name="Seki M."/>
            <person name="Shinozaki K."/>
        </authorList>
    </citation>
    <scope>NUCLEOTIDE SEQUENCE [LARGE SCALE MRNA]</scope>
    <source>
        <strain>cv. Columbia</strain>
    </source>
</reference>
<reference key="6">
    <citation type="submission" date="2006-02" db="EMBL/GenBank/DDBJ databases">
        <title>Arabidopsis ORF clones.</title>
        <authorList>
            <person name="Shinn P."/>
            <person name="Chen H."/>
            <person name="Kim C.J."/>
            <person name="Ecker J.R."/>
        </authorList>
    </citation>
    <scope>NUCLEOTIDE SEQUENCE [LARGE SCALE MRNA]</scope>
    <source>
        <strain>cv. Columbia</strain>
    </source>
</reference>
<reference key="7">
    <citation type="submission" date="2002-03" db="EMBL/GenBank/DDBJ databases">
        <title>Full-length cDNA from Arabidopsis thaliana.</title>
        <authorList>
            <person name="Brover V.V."/>
            <person name="Troukhan M.E."/>
            <person name="Alexandrov N.A."/>
            <person name="Lu Y.-P."/>
            <person name="Flavell R.B."/>
            <person name="Feldmann K.A."/>
        </authorList>
    </citation>
    <scope>NUCLEOTIDE SEQUENCE [LARGE SCALE MRNA]</scope>
</reference>
<dbReference type="EMBL" id="AF208343">
    <property type="protein sequence ID" value="AAF19969.1"/>
    <property type="molecule type" value="mRNA"/>
</dbReference>
<dbReference type="EMBL" id="AL049487">
    <property type="protein sequence ID" value="CAB39762.1"/>
    <property type="molecule type" value="Genomic_DNA"/>
</dbReference>
<dbReference type="EMBL" id="AL161516">
    <property type="protein sequence ID" value="CAB78133.1"/>
    <property type="molecule type" value="Genomic_DNA"/>
</dbReference>
<dbReference type="EMBL" id="CP002687">
    <property type="protein sequence ID" value="AEE82838.1"/>
    <property type="molecule type" value="Genomic_DNA"/>
</dbReference>
<dbReference type="EMBL" id="CP002687">
    <property type="protein sequence ID" value="AEE82839.1"/>
    <property type="molecule type" value="Genomic_DNA"/>
</dbReference>
<dbReference type="EMBL" id="CP002687">
    <property type="protein sequence ID" value="AEE82840.1"/>
    <property type="molecule type" value="Genomic_DNA"/>
</dbReference>
<dbReference type="EMBL" id="AK117700">
    <property type="protein sequence ID" value="BAC42352.1"/>
    <property type="molecule type" value="mRNA"/>
</dbReference>
<dbReference type="EMBL" id="AK317483">
    <property type="protein sequence ID" value="BAH20148.1"/>
    <property type="molecule type" value="mRNA"/>
</dbReference>
<dbReference type="EMBL" id="BT024545">
    <property type="protein sequence ID" value="ABD38884.1"/>
    <property type="molecule type" value="mRNA"/>
</dbReference>
<dbReference type="EMBL" id="AY087485">
    <property type="protein sequence ID" value="AAM65028.1"/>
    <property type="molecule type" value="mRNA"/>
</dbReference>
<dbReference type="PIR" id="T04060">
    <property type="entry name" value="T04060"/>
</dbReference>
<dbReference type="SMR" id="Q9S7A3"/>
<dbReference type="BioGRID" id="11900">
    <property type="interactions" value="1"/>
</dbReference>
<dbReference type="FunCoup" id="Q9S7A3">
    <property type="interactions" value="18"/>
</dbReference>
<dbReference type="STRING" id="3702.Q9S7A3"/>
<dbReference type="iPTMnet" id="Q9S7A3"/>
<dbReference type="PaxDb" id="3702-AT4G10100.3"/>
<dbReference type="ProteomicsDB" id="238346"/>
<dbReference type="EnsemblPlants" id="AT4G10100.1">
    <property type="protein sequence ID" value="AT4G10100.1"/>
    <property type="gene ID" value="AT4G10100"/>
</dbReference>
<dbReference type="EnsemblPlants" id="AT4G10100.2">
    <property type="protein sequence ID" value="AT4G10100.2"/>
    <property type="gene ID" value="AT4G10100"/>
</dbReference>
<dbReference type="EnsemblPlants" id="AT4G10100.3">
    <property type="protein sequence ID" value="AT4G10100.3"/>
    <property type="gene ID" value="AT4G10100"/>
</dbReference>
<dbReference type="GeneID" id="826601"/>
<dbReference type="Gramene" id="AT4G10100.1">
    <property type="protein sequence ID" value="AT4G10100.1"/>
    <property type="gene ID" value="AT4G10100"/>
</dbReference>
<dbReference type="Gramene" id="AT4G10100.2">
    <property type="protein sequence ID" value="AT4G10100.2"/>
    <property type="gene ID" value="AT4G10100"/>
</dbReference>
<dbReference type="Gramene" id="AT4G10100.3">
    <property type="protein sequence ID" value="AT4G10100.3"/>
    <property type="gene ID" value="AT4G10100"/>
</dbReference>
<dbReference type="KEGG" id="ath:AT4G10100"/>
<dbReference type="Araport" id="AT4G10100"/>
<dbReference type="TAIR" id="AT4G10100">
    <property type="gene designation" value="CNX7"/>
</dbReference>
<dbReference type="eggNOG" id="KOG3474">
    <property type="taxonomic scope" value="Eukaryota"/>
</dbReference>
<dbReference type="HOGENOM" id="CLU_114601_4_3_1"/>
<dbReference type="InParanoid" id="Q9S7A3"/>
<dbReference type="OMA" id="HVLFFAK"/>
<dbReference type="PhylomeDB" id="Q9S7A3"/>
<dbReference type="UniPathway" id="UPA00344"/>
<dbReference type="PRO" id="PR:Q9S7A3"/>
<dbReference type="Proteomes" id="UP000006548">
    <property type="component" value="Chromosome 4"/>
</dbReference>
<dbReference type="ExpressionAtlas" id="Q9S7A3">
    <property type="expression patterns" value="baseline and differential"/>
</dbReference>
<dbReference type="GO" id="GO:1990140">
    <property type="term" value="C:molybdopterin synthase complex"/>
    <property type="evidence" value="ECO:0000250"/>
    <property type="project" value="UniProtKB"/>
</dbReference>
<dbReference type="GO" id="GO:0030366">
    <property type="term" value="F:molybdopterin synthase activity"/>
    <property type="evidence" value="ECO:0007669"/>
    <property type="project" value="UniProtKB-UniRule"/>
</dbReference>
<dbReference type="GO" id="GO:0000166">
    <property type="term" value="F:nucleotide binding"/>
    <property type="evidence" value="ECO:0007669"/>
    <property type="project" value="UniProtKB-KW"/>
</dbReference>
<dbReference type="GO" id="GO:0009734">
    <property type="term" value="P:auxin-activated signaling pathway"/>
    <property type="evidence" value="ECO:0000315"/>
    <property type="project" value="TAIR"/>
</dbReference>
<dbReference type="GO" id="GO:0006777">
    <property type="term" value="P:Mo-molybdopterin cofactor biosynthetic process"/>
    <property type="evidence" value="ECO:0000250"/>
    <property type="project" value="UniProtKB"/>
</dbReference>
<dbReference type="GO" id="GO:0018315">
    <property type="term" value="P:molybdenum incorporation into molybdenum-molybdopterin complex"/>
    <property type="evidence" value="ECO:0000314"/>
    <property type="project" value="TAIR"/>
</dbReference>
<dbReference type="CDD" id="cd00754">
    <property type="entry name" value="Ubl_MoaD"/>
    <property type="match status" value="1"/>
</dbReference>
<dbReference type="FunFam" id="3.10.20.30:FF:000010">
    <property type="entry name" value="Molybdopterin synthase sulfur carrier subunit"/>
    <property type="match status" value="1"/>
</dbReference>
<dbReference type="Gene3D" id="3.10.20.30">
    <property type="match status" value="1"/>
</dbReference>
<dbReference type="HAMAP" id="MF_03051">
    <property type="entry name" value="MOCS2A"/>
    <property type="match status" value="1"/>
</dbReference>
<dbReference type="InterPro" id="IPR012675">
    <property type="entry name" value="Beta-grasp_dom_sf"/>
</dbReference>
<dbReference type="InterPro" id="IPR044672">
    <property type="entry name" value="MOCS2A"/>
</dbReference>
<dbReference type="InterPro" id="IPR028887">
    <property type="entry name" value="MOCS2A_euk"/>
</dbReference>
<dbReference type="InterPro" id="IPR016155">
    <property type="entry name" value="Mopterin_synth/thiamin_S_b"/>
</dbReference>
<dbReference type="InterPro" id="IPR003749">
    <property type="entry name" value="ThiS/MoaD-like"/>
</dbReference>
<dbReference type="NCBIfam" id="TIGR01682">
    <property type="entry name" value="moaD"/>
    <property type="match status" value="1"/>
</dbReference>
<dbReference type="PANTHER" id="PTHR33359">
    <property type="entry name" value="MOLYBDOPTERIN SYNTHASE SULFUR CARRIER SUBUNIT"/>
    <property type="match status" value="1"/>
</dbReference>
<dbReference type="PANTHER" id="PTHR33359:SF1">
    <property type="entry name" value="MOLYBDOPTERIN SYNTHASE SULFUR CARRIER SUBUNIT"/>
    <property type="match status" value="1"/>
</dbReference>
<dbReference type="Pfam" id="PF02597">
    <property type="entry name" value="ThiS"/>
    <property type="match status" value="1"/>
</dbReference>
<dbReference type="SUPFAM" id="SSF54285">
    <property type="entry name" value="MoaD/ThiS"/>
    <property type="match status" value="1"/>
</dbReference>
<gene>
    <name type="ordered locus">At4g10100</name>
    <name type="ORF">F28M11.20</name>
</gene>
<name>MOC2A_ARATH</name>
<proteinExistence type="inferred from homology"/>
<accession>Q9S7A3</accession>
<organism>
    <name type="scientific">Arabidopsis thaliana</name>
    <name type="common">Mouse-ear cress</name>
    <dbReference type="NCBI Taxonomy" id="3702"/>
    <lineage>
        <taxon>Eukaryota</taxon>
        <taxon>Viridiplantae</taxon>
        <taxon>Streptophyta</taxon>
        <taxon>Embryophyta</taxon>
        <taxon>Tracheophyta</taxon>
        <taxon>Spermatophyta</taxon>
        <taxon>Magnoliopsida</taxon>
        <taxon>eudicotyledons</taxon>
        <taxon>Gunneridae</taxon>
        <taxon>Pentapetalae</taxon>
        <taxon>rosids</taxon>
        <taxon>malvids</taxon>
        <taxon>Brassicales</taxon>
        <taxon>Brassicaceae</taxon>
        <taxon>Camelineae</taxon>
        <taxon>Arabidopsis</taxon>
    </lineage>
</organism>